<name>MCPT4_MOUSE</name>
<comment type="function">
    <text evidence="3 7">Has chymotrypsin-like activity. Hydrolyzes the amide bonds of synthetic substrates having Tyr and Phe residues at the P1 position. Preferentially hydrolyzes the 'Tyr-4-|-Ile-5' bond of angiotensin I and the 'Phe-20-|-Ala-21' bond of amyloid beta-protein, and is less active towards the 'Phe-8-|-His-9' bond of angiotensin I and the 'Phe-4-|-Ala-5' and 'Tyr-10-|-Glu-11' bonds of amyloid beta-protein. Involved in thrombin regulation and fibronectin processing.</text>
</comment>
<comment type="activity regulation">
    <text>Completely inhibited by serine protease inhibitors such as chymostatin, diisopropylfluorophosphate and phenylmethylsulfonyl fluoride, but not by p-tosyl-L-phenylalanine chloromethyl ketone, p-tosyl-L-lysine chloromethyl ketone, pepstatin, E-64, EDTA or o-phenanthroline. Also inhibited by lima bean trypsin inhibitor, soy bean trypsin inhibitor and human plasma alpha1-antichymotrypsin.</text>
</comment>
<comment type="biophysicochemical properties">
    <phDependence>
        <text>Optimum pH is 9 at high salt concentrations.</text>
    </phDependence>
</comment>
<comment type="subunit">
    <text evidence="4 7">Monomer (PubMed:9538257). Interacts with iripin-2, a serine protease inhibitor from Ixodes ricinus saliva (PubMed:20940421).</text>
</comment>
<comment type="tissue specificity">
    <text evidence="7">Submucosal mast cells. In femoral muscle, detected in myocytes but not in mast cells.</text>
</comment>
<comment type="mass spectrometry"/>
<comment type="disruption phenotype">
    <text evidence="3">Mice display an impaired ability to inactivate thrombin or degrade fibronectin in peritoneal cells.</text>
</comment>
<comment type="similarity">
    <text evidence="2">Belongs to the peptidase S1 family. Granzyme subfamily.</text>
</comment>
<comment type="sequence caution" evidence="8">
    <conflict type="erroneous initiation">
        <sequence resource="EMBL-CDS" id="BAB18732"/>
    </conflict>
</comment>
<gene>
    <name type="primary">Mcpt4</name>
</gene>
<evidence type="ECO:0000250" key="1"/>
<evidence type="ECO:0000255" key="2">
    <source>
        <dbReference type="PROSITE-ProRule" id="PRU00274"/>
    </source>
</evidence>
<evidence type="ECO:0000269" key="3">
    <source>
    </source>
</evidence>
<evidence type="ECO:0000269" key="4">
    <source>
    </source>
</evidence>
<evidence type="ECO:0000269" key="5">
    <source>
    </source>
</evidence>
<evidence type="ECO:0000269" key="6">
    <source>
    </source>
</evidence>
<evidence type="ECO:0000269" key="7">
    <source>
    </source>
</evidence>
<evidence type="ECO:0000305" key="8"/>
<dbReference type="EC" id="3.4.21.-"/>
<dbReference type="EMBL" id="M55617">
    <property type="protein sequence ID" value="AAA39989.1"/>
    <property type="molecule type" value="mRNA"/>
</dbReference>
<dbReference type="EMBL" id="M55616">
    <property type="protein sequence ID" value="AAA72939.1"/>
    <property type="molecule type" value="Genomic_DNA"/>
</dbReference>
<dbReference type="EMBL" id="AY007569">
    <property type="protein sequence ID" value="AAG24503.1"/>
    <property type="molecule type" value="mRNA"/>
</dbReference>
<dbReference type="EMBL" id="X68804">
    <property type="protein sequence ID" value="CAA48704.1"/>
    <property type="molecule type" value="mRNA"/>
</dbReference>
<dbReference type="EMBL" id="AB051900">
    <property type="protein sequence ID" value="BAB18732.1"/>
    <property type="status" value="ALT_INIT"/>
    <property type="molecule type" value="mRNA"/>
</dbReference>
<dbReference type="CCDS" id="CCDS27140.1"/>
<dbReference type="PIR" id="B38678">
    <property type="entry name" value="B38678"/>
</dbReference>
<dbReference type="PIR" id="JE0151">
    <property type="entry name" value="JE0151"/>
</dbReference>
<dbReference type="PIR" id="S26042">
    <property type="entry name" value="S26042"/>
</dbReference>
<dbReference type="RefSeq" id="NP_034909.2">
    <property type="nucleotide sequence ID" value="NM_010779.2"/>
</dbReference>
<dbReference type="SMR" id="P21812"/>
<dbReference type="FunCoup" id="P21812">
    <property type="interactions" value="251"/>
</dbReference>
<dbReference type="STRING" id="10090.ENSMUSP00000038103"/>
<dbReference type="MEROPS" id="S01.149"/>
<dbReference type="iPTMnet" id="P21812"/>
<dbReference type="PhosphoSitePlus" id="P21812"/>
<dbReference type="jPOST" id="P21812"/>
<dbReference type="PaxDb" id="10090-ENSMUSP00000038103"/>
<dbReference type="PeptideAtlas" id="P21812"/>
<dbReference type="ProteomicsDB" id="295713"/>
<dbReference type="DNASU" id="17227"/>
<dbReference type="GeneID" id="17227"/>
<dbReference type="KEGG" id="mmu:17227"/>
<dbReference type="AGR" id="MGI:96940"/>
<dbReference type="CTD" id="17227"/>
<dbReference type="MGI" id="MGI:96940">
    <property type="gene designation" value="Mcpt4"/>
</dbReference>
<dbReference type="eggNOG" id="KOG3627">
    <property type="taxonomic scope" value="Eukaryota"/>
</dbReference>
<dbReference type="InParanoid" id="P21812"/>
<dbReference type="OrthoDB" id="5565075at2759"/>
<dbReference type="PhylomeDB" id="P21812"/>
<dbReference type="BRENDA" id="3.4.21.39">
    <property type="organism ID" value="3474"/>
</dbReference>
<dbReference type="BioGRID-ORCS" id="17227">
    <property type="hits" value="1 hit in 77 CRISPR screens"/>
</dbReference>
<dbReference type="ChiTaRS" id="Mcpt4">
    <property type="organism name" value="mouse"/>
</dbReference>
<dbReference type="PRO" id="PR:P21812"/>
<dbReference type="Proteomes" id="UP000000589">
    <property type="component" value="Unplaced"/>
</dbReference>
<dbReference type="RNAct" id="P21812">
    <property type="molecule type" value="protein"/>
</dbReference>
<dbReference type="GO" id="GO:0008233">
    <property type="term" value="F:peptidase activity"/>
    <property type="evidence" value="ECO:0000314"/>
    <property type="project" value="MGI"/>
</dbReference>
<dbReference type="GO" id="GO:0004252">
    <property type="term" value="F:serine-type endopeptidase activity"/>
    <property type="evidence" value="ECO:0000314"/>
    <property type="project" value="UniProtKB"/>
</dbReference>
<dbReference type="GO" id="GO:0006508">
    <property type="term" value="P:proteolysis"/>
    <property type="evidence" value="ECO:0000314"/>
    <property type="project" value="UniProtKB"/>
</dbReference>
<dbReference type="GO" id="GO:0002002">
    <property type="term" value="P:regulation of angiotensin levels in blood"/>
    <property type="evidence" value="ECO:0000316"/>
    <property type="project" value="MGI"/>
</dbReference>
<dbReference type="CDD" id="cd00190">
    <property type="entry name" value="Tryp_SPc"/>
    <property type="match status" value="1"/>
</dbReference>
<dbReference type="FunFam" id="2.40.10.10:FF:000416">
    <property type="match status" value="1"/>
</dbReference>
<dbReference type="FunFam" id="2.40.10.10:FF:000005">
    <property type="entry name" value="Serine protease 37"/>
    <property type="match status" value="1"/>
</dbReference>
<dbReference type="Gene3D" id="2.40.10.10">
    <property type="entry name" value="Trypsin-like serine proteases"/>
    <property type="match status" value="2"/>
</dbReference>
<dbReference type="InterPro" id="IPR009003">
    <property type="entry name" value="Peptidase_S1_PA"/>
</dbReference>
<dbReference type="InterPro" id="IPR043504">
    <property type="entry name" value="Peptidase_S1_PA_chymotrypsin"/>
</dbReference>
<dbReference type="InterPro" id="IPR001314">
    <property type="entry name" value="Peptidase_S1A"/>
</dbReference>
<dbReference type="InterPro" id="IPR001254">
    <property type="entry name" value="Trypsin_dom"/>
</dbReference>
<dbReference type="InterPro" id="IPR018114">
    <property type="entry name" value="TRYPSIN_HIS"/>
</dbReference>
<dbReference type="InterPro" id="IPR033116">
    <property type="entry name" value="TRYPSIN_SER"/>
</dbReference>
<dbReference type="PANTHER" id="PTHR24271:SF23">
    <property type="entry name" value="CHYMASE 2, MAST CELL-RELATED"/>
    <property type="match status" value="1"/>
</dbReference>
<dbReference type="PANTHER" id="PTHR24271">
    <property type="entry name" value="KALLIKREIN-RELATED"/>
    <property type="match status" value="1"/>
</dbReference>
<dbReference type="Pfam" id="PF00089">
    <property type="entry name" value="Trypsin"/>
    <property type="match status" value="1"/>
</dbReference>
<dbReference type="PRINTS" id="PR00722">
    <property type="entry name" value="CHYMOTRYPSIN"/>
</dbReference>
<dbReference type="SMART" id="SM00020">
    <property type="entry name" value="Tryp_SPc"/>
    <property type="match status" value="1"/>
</dbReference>
<dbReference type="SUPFAM" id="SSF50494">
    <property type="entry name" value="Trypsin-like serine proteases"/>
    <property type="match status" value="1"/>
</dbReference>
<dbReference type="PROSITE" id="PS50240">
    <property type="entry name" value="TRYPSIN_DOM"/>
    <property type="match status" value="1"/>
</dbReference>
<dbReference type="PROSITE" id="PS00134">
    <property type="entry name" value="TRYPSIN_HIS"/>
    <property type="match status" value="1"/>
</dbReference>
<dbReference type="PROSITE" id="PS00135">
    <property type="entry name" value="TRYPSIN_SER"/>
    <property type="match status" value="1"/>
</dbReference>
<keyword id="KW-0903">Direct protein sequencing</keyword>
<keyword id="KW-1015">Disulfide bond</keyword>
<keyword id="KW-0378">Hydrolase</keyword>
<keyword id="KW-0645">Protease</keyword>
<keyword id="KW-1185">Reference proteome</keyword>
<keyword id="KW-0720">Serine protease</keyword>
<keyword id="KW-0732">Signal</keyword>
<keyword id="KW-0865">Zymogen</keyword>
<reference key="1">
    <citation type="journal article" date="1991" name="J. Biol. Chem.">
        <title>Cloning of the cDNA and gene for mouse mast cell protease 4. Demonstration of its late transcription in mast cell subclasses and analysis of its homology to subclass-specific neutral proteases of the mouse and rat.</title>
        <authorList>
            <person name="Serafin W.E."/>
            <person name="Sullivan T.P."/>
            <person name="Conder G.A."/>
            <person name="Ebrahimi A."/>
            <person name="Marcham P."/>
            <person name="Johnson S.S."/>
            <person name="Austen K.F."/>
            <person name="Reynolds D.S."/>
        </authorList>
    </citation>
    <scope>NUCLEOTIDE SEQUENCE [GENOMIC DNA / MRNA]</scope>
    <source>
        <strain>BALB/cJ</strain>
    </source>
</reference>
<reference key="2">
    <citation type="journal article" date="2001" name="Am. J. Pathol.">
        <title>Independent influence of strain difference and mi transcription factor on the expression of mouse mast cell chymases.</title>
        <authorList>
            <person name="Ge Y."/>
            <person name="Jippo T."/>
            <person name="Lee Y.-M."/>
            <person name="Adachi S."/>
            <person name="Kitamura Y."/>
        </authorList>
    </citation>
    <scope>NUCLEOTIDE SEQUENCE [MRNA]</scope>
    <source>
        <strain>C57BL/6J</strain>
    </source>
</reference>
<reference key="3">
    <citation type="journal article" date="1991" name="Eur. J. Immunol.">
        <title>Cloning and structural analysis of MMCP-1, MMCP-4 and MMCP-5, three mouse mast cell-specific serine proteases.</title>
        <authorList>
            <person name="Huang R."/>
            <person name="Blom T."/>
            <person name="Hellman L."/>
        </authorList>
    </citation>
    <scope>NUCLEOTIDE SEQUENCE OF 7-246</scope>
    <source>
        <strain>Leaden X A1</strain>
        <tissue>Mastocytoma</tissue>
    </source>
</reference>
<reference key="4">
    <citation type="journal article" date="1998" name="J. Biochem.">
        <title>Purification and characterization of myonase from X-chromosome linked muscular dystrophic mouse skeletal muscle.</title>
        <authorList>
            <person name="Hori S."/>
            <person name="Ohtani S."/>
            <person name="Hori C."/>
            <person name="Nokihara K."/>
        </authorList>
    </citation>
    <scope>NUCLEOTIDE SEQUENCE OF 7-246</scope>
    <scope>PROTEIN SEQUENCE OF 21-66; 76-84; 86-93; 96-106; 126-143; 146-155; 178-180; 197-207 AND 231-238</scope>
    <scope>FUNCTION</scope>
    <scope>SUBUNIT</scope>
    <scope>TISSUE SPECIFICITY</scope>
    <scope>MASS SPECTROMETRY</scope>
    <source>
        <tissue>Skeletal muscle</tissue>
    </source>
</reference>
<reference key="5">
    <citation type="journal article" date="1990" name="Proc. Natl. Acad. Sci. U.S.A.">
        <title>Different mouse mast cell populations express various combinations of at least six distinct mast cell serine proteases.</title>
        <authorList>
            <person name="Reynolds D.S."/>
            <person name="Stevens R.L."/>
            <person name="Lane W.S."/>
            <person name="Carr M.H."/>
            <person name="Austen K.F."/>
            <person name="Serafin W.E."/>
        </authorList>
    </citation>
    <scope>PROTEIN SEQUENCE OF 21-43</scope>
</reference>
<reference key="6">
    <citation type="journal article" date="1993" name="Biochem. J.">
        <title>Biochemical and immunological characterization of multiple glycoforms of mouse mast cell protease 1: comparison with an isolated murine serosal mast cell protease (MMCP-4).</title>
        <authorList>
            <person name="Newlands G.F.J."/>
            <person name="Knox D.P."/>
            <person name="Pirie-Shepherd S.R."/>
            <person name="Miller H.R.P."/>
        </authorList>
    </citation>
    <scope>PROTEIN SEQUENCE OF 21-40</scope>
</reference>
<reference key="7">
    <citation type="journal article" date="2003" name="J. Exp. Med.">
        <title>The chymase, mouse mast cell protease 4, constitutes the major chymotrypsin-like activity in peritoneum and ear tissue. A role for mouse mast cell protease 4 in thrombin regulation and fibronectin turnover.</title>
        <authorList>
            <person name="Tchougounova E."/>
            <person name="Pejler G."/>
            <person name="Abrink M."/>
        </authorList>
    </citation>
    <scope>FUNCTION</scope>
    <scope>DISRUPTION PHENOTYPE</scope>
</reference>
<reference key="8">
    <citation type="journal article" date="2011" name="Blood">
        <title>A tick salivary protein targets cathepsin G and chymase and inhibits host inflammation and platelet aggregation.</title>
        <authorList>
            <person name="Chmelar J."/>
            <person name="Oliveira C.J."/>
            <person name="Rezacova P."/>
            <person name="Francischetti I.M."/>
            <person name="Kovarova Z."/>
            <person name="Pejler G."/>
            <person name="Kopacek P."/>
            <person name="Ribeiro J.M."/>
            <person name="Mares M."/>
            <person name="Kopecky J."/>
            <person name="Kotsyfakis M."/>
        </authorList>
    </citation>
    <scope>INTERACTION WITH TICK IRIPIN-2</scope>
</reference>
<proteinExistence type="evidence at protein level"/>
<accession>P21812</accession>
<accession>Q9EPQ9</accession>
<accession>Q9EQT2</accession>
<feature type="signal peptide">
    <location>
        <begin position="1"/>
        <end position="18"/>
    </location>
</feature>
<feature type="propeptide" id="PRO_0000027453" description="Activation peptide" evidence="5 6 7">
    <location>
        <begin position="19"/>
        <end position="20"/>
    </location>
</feature>
<feature type="chain" id="PRO_0000027454" description="Mast cell protease 4">
    <location>
        <begin position="21"/>
        <end position="246"/>
    </location>
</feature>
<feature type="domain" description="Peptidase S1" evidence="2">
    <location>
        <begin position="21"/>
        <end position="244"/>
    </location>
</feature>
<feature type="active site" description="Charge relay system" evidence="1">
    <location>
        <position position="65"/>
    </location>
</feature>
<feature type="active site" description="Charge relay system" evidence="1">
    <location>
        <position position="109"/>
    </location>
</feature>
<feature type="active site" description="Charge relay system" evidence="1">
    <location>
        <position position="202"/>
    </location>
</feature>
<feature type="disulfide bond" evidence="2">
    <location>
        <begin position="50"/>
        <end position="66"/>
    </location>
</feature>
<feature type="disulfide bond" evidence="2">
    <location>
        <begin position="143"/>
        <end position="208"/>
    </location>
</feature>
<feature type="disulfide bond" evidence="2">
    <location>
        <begin position="174"/>
        <end position="187"/>
    </location>
</feature>
<feature type="sequence variant" description="In strain: C57BL/6 and Leaden X A1.">
    <original>M</original>
    <variation>L</variation>
    <location>
        <position position="61"/>
    </location>
</feature>
<feature type="sequence variant" description="In strain: C57BL/6 and Leaden X A1.">
    <original>T</original>
    <variation>I</variation>
    <location>
        <position position="160"/>
    </location>
</feature>
<feature type="sequence variant" description="In strain: C57BL/6 and Leaden X A1.">
    <original>E</original>
    <variation>KK</variation>
    <location>
        <position position="246"/>
    </location>
</feature>
<protein>
    <recommendedName>
        <fullName>Mast cell protease 4</fullName>
        <shortName>mMCP-4</shortName>
        <ecNumber>3.4.21.-</ecNumber>
    </recommendedName>
    <alternativeName>
        <fullName>MSMCP</fullName>
    </alternativeName>
    <alternativeName>
        <fullName>Myonase</fullName>
    </alternativeName>
    <alternativeName>
        <fullName>Serosal mast cell protease</fullName>
    </alternativeName>
</protein>
<sequence>MQALLFLMALLLPSGAGAEEIIGGVESRPHSRPYMAHLEITTERGFTATCGGFLITRQFVMTAAHCSGREITVTLGAHDVSKTESTQQKIKVEKQIVHPKYNFYSNLHDIMLLKLQKKAKETPSVNVIPLPRPSDFIKPGKMCRAAGWGRTGVTEPTSDTLREVKLRIMDKEACKNYWHYDYNLQVCVGSPRKKRSAYKGDSGGPLLCAGVAHGIVSYGRGDAKPPAVFTRISSYVPWINRVIKGE</sequence>
<organism>
    <name type="scientific">Mus musculus</name>
    <name type="common">Mouse</name>
    <dbReference type="NCBI Taxonomy" id="10090"/>
    <lineage>
        <taxon>Eukaryota</taxon>
        <taxon>Metazoa</taxon>
        <taxon>Chordata</taxon>
        <taxon>Craniata</taxon>
        <taxon>Vertebrata</taxon>
        <taxon>Euteleostomi</taxon>
        <taxon>Mammalia</taxon>
        <taxon>Eutheria</taxon>
        <taxon>Euarchontoglires</taxon>
        <taxon>Glires</taxon>
        <taxon>Rodentia</taxon>
        <taxon>Myomorpha</taxon>
        <taxon>Muroidea</taxon>
        <taxon>Muridae</taxon>
        <taxon>Murinae</taxon>
        <taxon>Mus</taxon>
        <taxon>Mus</taxon>
    </lineage>
</organism>